<feature type="chain" id="PRO_0000128805" description="4-hydroxy-3-methylbut-2-enyl diphosphate reductase">
    <location>
        <begin position="1"/>
        <end position="282"/>
    </location>
</feature>
<feature type="active site" description="Proton donor" evidence="1">
    <location>
        <position position="130"/>
    </location>
</feature>
<feature type="binding site" evidence="1">
    <location>
        <position position="14"/>
    </location>
    <ligand>
        <name>[4Fe-4S] cluster</name>
        <dbReference type="ChEBI" id="CHEBI:49883"/>
    </ligand>
</feature>
<feature type="binding site" evidence="1">
    <location>
        <position position="43"/>
    </location>
    <ligand>
        <name>(2E)-4-hydroxy-3-methylbut-2-enyl diphosphate</name>
        <dbReference type="ChEBI" id="CHEBI:128753"/>
    </ligand>
</feature>
<feature type="binding site" evidence="1">
    <location>
        <position position="43"/>
    </location>
    <ligand>
        <name>dimethylallyl diphosphate</name>
        <dbReference type="ChEBI" id="CHEBI:57623"/>
    </ligand>
</feature>
<feature type="binding site" evidence="1">
    <location>
        <position position="43"/>
    </location>
    <ligand>
        <name>isopentenyl diphosphate</name>
        <dbReference type="ChEBI" id="CHEBI:128769"/>
    </ligand>
</feature>
<feature type="binding site" evidence="1">
    <location>
        <position position="78"/>
    </location>
    <ligand>
        <name>(2E)-4-hydroxy-3-methylbut-2-enyl diphosphate</name>
        <dbReference type="ChEBI" id="CHEBI:128753"/>
    </ligand>
</feature>
<feature type="binding site" evidence="1">
    <location>
        <position position="78"/>
    </location>
    <ligand>
        <name>dimethylallyl diphosphate</name>
        <dbReference type="ChEBI" id="CHEBI:57623"/>
    </ligand>
</feature>
<feature type="binding site" evidence="1">
    <location>
        <position position="78"/>
    </location>
    <ligand>
        <name>isopentenyl diphosphate</name>
        <dbReference type="ChEBI" id="CHEBI:128769"/>
    </ligand>
</feature>
<feature type="binding site" evidence="1">
    <location>
        <position position="100"/>
    </location>
    <ligand>
        <name>[4Fe-4S] cluster</name>
        <dbReference type="ChEBI" id="CHEBI:49883"/>
    </ligand>
</feature>
<feature type="binding site" evidence="1">
    <location>
        <position position="128"/>
    </location>
    <ligand>
        <name>(2E)-4-hydroxy-3-methylbut-2-enyl diphosphate</name>
        <dbReference type="ChEBI" id="CHEBI:128753"/>
    </ligand>
</feature>
<feature type="binding site" evidence="1">
    <location>
        <position position="128"/>
    </location>
    <ligand>
        <name>dimethylallyl diphosphate</name>
        <dbReference type="ChEBI" id="CHEBI:57623"/>
    </ligand>
</feature>
<feature type="binding site" evidence="1">
    <location>
        <position position="128"/>
    </location>
    <ligand>
        <name>isopentenyl diphosphate</name>
        <dbReference type="ChEBI" id="CHEBI:128769"/>
    </ligand>
</feature>
<feature type="binding site" evidence="1">
    <location>
        <position position="164"/>
    </location>
    <ligand>
        <name>(2E)-4-hydroxy-3-methylbut-2-enyl diphosphate</name>
        <dbReference type="ChEBI" id="CHEBI:128753"/>
    </ligand>
</feature>
<feature type="binding site" evidence="1">
    <location>
        <position position="192"/>
    </location>
    <ligand>
        <name>[4Fe-4S] cluster</name>
        <dbReference type="ChEBI" id="CHEBI:49883"/>
    </ligand>
</feature>
<feature type="binding site" evidence="1">
    <location>
        <position position="220"/>
    </location>
    <ligand>
        <name>(2E)-4-hydroxy-3-methylbut-2-enyl diphosphate</name>
        <dbReference type="ChEBI" id="CHEBI:128753"/>
    </ligand>
</feature>
<feature type="binding site" evidence="1">
    <location>
        <position position="220"/>
    </location>
    <ligand>
        <name>dimethylallyl diphosphate</name>
        <dbReference type="ChEBI" id="CHEBI:57623"/>
    </ligand>
</feature>
<feature type="binding site" evidence="1">
    <location>
        <position position="220"/>
    </location>
    <ligand>
        <name>isopentenyl diphosphate</name>
        <dbReference type="ChEBI" id="CHEBI:128769"/>
    </ligand>
</feature>
<feature type="binding site" evidence="1">
    <location>
        <position position="221"/>
    </location>
    <ligand>
        <name>(2E)-4-hydroxy-3-methylbut-2-enyl diphosphate</name>
        <dbReference type="ChEBI" id="CHEBI:128753"/>
    </ligand>
</feature>
<feature type="binding site" evidence="1">
    <location>
        <position position="221"/>
    </location>
    <ligand>
        <name>dimethylallyl diphosphate</name>
        <dbReference type="ChEBI" id="CHEBI:57623"/>
    </ligand>
</feature>
<feature type="binding site" evidence="1">
    <location>
        <position position="221"/>
    </location>
    <ligand>
        <name>isopentenyl diphosphate</name>
        <dbReference type="ChEBI" id="CHEBI:128769"/>
    </ligand>
</feature>
<feature type="binding site" evidence="1">
    <location>
        <position position="222"/>
    </location>
    <ligand>
        <name>(2E)-4-hydroxy-3-methylbut-2-enyl diphosphate</name>
        <dbReference type="ChEBI" id="CHEBI:128753"/>
    </ligand>
</feature>
<feature type="binding site" evidence="1">
    <location>
        <position position="222"/>
    </location>
    <ligand>
        <name>dimethylallyl diphosphate</name>
        <dbReference type="ChEBI" id="CHEBI:57623"/>
    </ligand>
</feature>
<feature type="binding site" evidence="1">
    <location>
        <position position="222"/>
    </location>
    <ligand>
        <name>isopentenyl diphosphate</name>
        <dbReference type="ChEBI" id="CHEBI:128769"/>
    </ligand>
</feature>
<feature type="binding site" evidence="1">
    <location>
        <position position="266"/>
    </location>
    <ligand>
        <name>(2E)-4-hydroxy-3-methylbut-2-enyl diphosphate</name>
        <dbReference type="ChEBI" id="CHEBI:128753"/>
    </ligand>
</feature>
<feature type="binding site" evidence="1">
    <location>
        <position position="266"/>
    </location>
    <ligand>
        <name>dimethylallyl diphosphate</name>
        <dbReference type="ChEBI" id="CHEBI:57623"/>
    </ligand>
</feature>
<feature type="binding site" evidence="1">
    <location>
        <position position="266"/>
    </location>
    <ligand>
        <name>isopentenyl diphosphate</name>
        <dbReference type="ChEBI" id="CHEBI:128769"/>
    </ligand>
</feature>
<dbReference type="EC" id="1.17.7.4" evidence="1"/>
<dbReference type="EMBL" id="BA000016">
    <property type="protein sequence ID" value="BAB80791.1"/>
    <property type="molecule type" value="Genomic_DNA"/>
</dbReference>
<dbReference type="RefSeq" id="WP_011010230.1">
    <property type="nucleotide sequence ID" value="NC_003366.1"/>
</dbReference>
<dbReference type="SMR" id="P58675"/>
<dbReference type="STRING" id="195102.gene:10490348"/>
<dbReference type="KEGG" id="cpe:CPE1085"/>
<dbReference type="HOGENOM" id="CLU_027486_0_1_9"/>
<dbReference type="UniPathway" id="UPA00056">
    <property type="reaction ID" value="UER00097"/>
</dbReference>
<dbReference type="UniPathway" id="UPA00059">
    <property type="reaction ID" value="UER00105"/>
</dbReference>
<dbReference type="Proteomes" id="UP000000818">
    <property type="component" value="Chromosome"/>
</dbReference>
<dbReference type="GO" id="GO:0051539">
    <property type="term" value="F:4 iron, 4 sulfur cluster binding"/>
    <property type="evidence" value="ECO:0007669"/>
    <property type="project" value="UniProtKB-UniRule"/>
</dbReference>
<dbReference type="GO" id="GO:0051745">
    <property type="term" value="F:4-hydroxy-3-methylbut-2-enyl diphosphate reductase activity"/>
    <property type="evidence" value="ECO:0007669"/>
    <property type="project" value="UniProtKB-UniRule"/>
</dbReference>
<dbReference type="GO" id="GO:0046872">
    <property type="term" value="F:metal ion binding"/>
    <property type="evidence" value="ECO:0007669"/>
    <property type="project" value="UniProtKB-KW"/>
</dbReference>
<dbReference type="GO" id="GO:0050992">
    <property type="term" value="P:dimethylallyl diphosphate biosynthetic process"/>
    <property type="evidence" value="ECO:0007669"/>
    <property type="project" value="UniProtKB-UniRule"/>
</dbReference>
<dbReference type="GO" id="GO:0019288">
    <property type="term" value="P:isopentenyl diphosphate biosynthetic process, methylerythritol 4-phosphate pathway"/>
    <property type="evidence" value="ECO:0007669"/>
    <property type="project" value="UniProtKB-UniRule"/>
</dbReference>
<dbReference type="GO" id="GO:0016114">
    <property type="term" value="P:terpenoid biosynthetic process"/>
    <property type="evidence" value="ECO:0007669"/>
    <property type="project" value="UniProtKB-UniRule"/>
</dbReference>
<dbReference type="CDD" id="cd13944">
    <property type="entry name" value="lytB_ispH"/>
    <property type="match status" value="1"/>
</dbReference>
<dbReference type="Gene3D" id="3.40.50.11270">
    <property type="match status" value="1"/>
</dbReference>
<dbReference type="Gene3D" id="3.40.1010.20">
    <property type="entry name" value="4-hydroxy-3-methylbut-2-enyl diphosphate reductase, catalytic domain"/>
    <property type="match status" value="2"/>
</dbReference>
<dbReference type="HAMAP" id="MF_00191">
    <property type="entry name" value="IspH"/>
    <property type="match status" value="1"/>
</dbReference>
<dbReference type="InterPro" id="IPR003451">
    <property type="entry name" value="LytB/IspH"/>
</dbReference>
<dbReference type="NCBIfam" id="TIGR00216">
    <property type="entry name" value="ispH_lytB"/>
    <property type="match status" value="1"/>
</dbReference>
<dbReference type="NCBIfam" id="NF002187">
    <property type="entry name" value="PRK01045.1-1"/>
    <property type="match status" value="1"/>
</dbReference>
<dbReference type="NCBIfam" id="NF009024">
    <property type="entry name" value="PRK12360.1"/>
    <property type="match status" value="1"/>
</dbReference>
<dbReference type="PANTHER" id="PTHR30426">
    <property type="entry name" value="4-HYDROXY-3-METHYLBUT-2-ENYL DIPHOSPHATE REDUCTASE"/>
    <property type="match status" value="1"/>
</dbReference>
<dbReference type="PANTHER" id="PTHR30426:SF0">
    <property type="entry name" value="4-HYDROXY-3-METHYLBUT-2-ENYL DIPHOSPHATE REDUCTASE"/>
    <property type="match status" value="1"/>
</dbReference>
<dbReference type="Pfam" id="PF02401">
    <property type="entry name" value="LYTB"/>
    <property type="match status" value="1"/>
</dbReference>
<proteinExistence type="inferred from homology"/>
<sequence>MERNVILAKNAGFCFGVKRAVDEAIKYQKEFGKKIYTLGPLIHNNDVVNYLEDNNIFAIELSDADSLKKGDVVLIRSHGVKESVIKDLTDKGLIVKNATCPYVTNIQLKVKKCYEQGYKIIIVGDKNHPEVIGINGWCNDSAIITNGKTELENIPAKVCVVSQTTEKKETWNKVLNEIVRASKEIVAFNTICSATDVRQKSVQELSKEADLVFVIGGKNSSNTTKLYEICKKECPKSYHIENVKELDESLLEDESVKTIGITAGASTPDWIINEVISKIKEL</sequence>
<reference key="1">
    <citation type="journal article" date="2002" name="Proc. Natl. Acad. Sci. U.S.A.">
        <title>Complete genome sequence of Clostridium perfringens, an anaerobic flesh-eater.</title>
        <authorList>
            <person name="Shimizu T."/>
            <person name="Ohtani K."/>
            <person name="Hirakawa H."/>
            <person name="Ohshima K."/>
            <person name="Yamashita A."/>
            <person name="Shiba T."/>
            <person name="Ogasawara N."/>
            <person name="Hattori M."/>
            <person name="Kuhara S."/>
            <person name="Hayashi H."/>
        </authorList>
    </citation>
    <scope>NUCLEOTIDE SEQUENCE [LARGE SCALE GENOMIC DNA]</scope>
    <source>
        <strain>13 / Type A</strain>
    </source>
</reference>
<evidence type="ECO:0000255" key="1">
    <source>
        <dbReference type="HAMAP-Rule" id="MF_00191"/>
    </source>
</evidence>
<gene>
    <name evidence="1" type="primary">ispH</name>
    <name type="synonym">lytB</name>
    <name type="ordered locus">CPE1085</name>
</gene>
<protein>
    <recommendedName>
        <fullName evidence="1">4-hydroxy-3-methylbut-2-enyl diphosphate reductase</fullName>
        <shortName evidence="1">HMBPP reductase</shortName>
        <ecNumber evidence="1">1.17.7.4</ecNumber>
    </recommendedName>
</protein>
<accession>P58675</accession>
<keyword id="KW-0004">4Fe-4S</keyword>
<keyword id="KW-0408">Iron</keyword>
<keyword id="KW-0411">Iron-sulfur</keyword>
<keyword id="KW-0414">Isoprene biosynthesis</keyword>
<keyword id="KW-0479">Metal-binding</keyword>
<keyword id="KW-0560">Oxidoreductase</keyword>
<keyword id="KW-1185">Reference proteome</keyword>
<organism>
    <name type="scientific">Clostridium perfringens (strain 13 / Type A)</name>
    <dbReference type="NCBI Taxonomy" id="195102"/>
    <lineage>
        <taxon>Bacteria</taxon>
        <taxon>Bacillati</taxon>
        <taxon>Bacillota</taxon>
        <taxon>Clostridia</taxon>
        <taxon>Eubacteriales</taxon>
        <taxon>Clostridiaceae</taxon>
        <taxon>Clostridium</taxon>
    </lineage>
</organism>
<comment type="function">
    <text evidence="1">Catalyzes the conversion of 1-hydroxy-2-methyl-2-(E)-butenyl 4-diphosphate (HMBPP) into a mixture of isopentenyl diphosphate (IPP) and dimethylallyl diphosphate (DMAPP). Acts in the terminal step of the DOXP/MEP pathway for isoprenoid precursor biosynthesis.</text>
</comment>
<comment type="catalytic activity">
    <reaction evidence="1">
        <text>isopentenyl diphosphate + 2 oxidized [2Fe-2S]-[ferredoxin] + H2O = (2E)-4-hydroxy-3-methylbut-2-enyl diphosphate + 2 reduced [2Fe-2S]-[ferredoxin] + 2 H(+)</text>
        <dbReference type="Rhea" id="RHEA:24488"/>
        <dbReference type="Rhea" id="RHEA-COMP:10000"/>
        <dbReference type="Rhea" id="RHEA-COMP:10001"/>
        <dbReference type="ChEBI" id="CHEBI:15377"/>
        <dbReference type="ChEBI" id="CHEBI:15378"/>
        <dbReference type="ChEBI" id="CHEBI:33737"/>
        <dbReference type="ChEBI" id="CHEBI:33738"/>
        <dbReference type="ChEBI" id="CHEBI:128753"/>
        <dbReference type="ChEBI" id="CHEBI:128769"/>
        <dbReference type="EC" id="1.17.7.4"/>
    </reaction>
</comment>
<comment type="catalytic activity">
    <reaction evidence="1">
        <text>dimethylallyl diphosphate + 2 oxidized [2Fe-2S]-[ferredoxin] + H2O = (2E)-4-hydroxy-3-methylbut-2-enyl diphosphate + 2 reduced [2Fe-2S]-[ferredoxin] + 2 H(+)</text>
        <dbReference type="Rhea" id="RHEA:24825"/>
        <dbReference type="Rhea" id="RHEA-COMP:10000"/>
        <dbReference type="Rhea" id="RHEA-COMP:10001"/>
        <dbReference type="ChEBI" id="CHEBI:15377"/>
        <dbReference type="ChEBI" id="CHEBI:15378"/>
        <dbReference type="ChEBI" id="CHEBI:33737"/>
        <dbReference type="ChEBI" id="CHEBI:33738"/>
        <dbReference type="ChEBI" id="CHEBI:57623"/>
        <dbReference type="ChEBI" id="CHEBI:128753"/>
        <dbReference type="EC" id="1.17.7.4"/>
    </reaction>
</comment>
<comment type="cofactor">
    <cofactor evidence="1">
        <name>[4Fe-4S] cluster</name>
        <dbReference type="ChEBI" id="CHEBI:49883"/>
    </cofactor>
    <text evidence="1">Binds 1 [4Fe-4S] cluster per subunit.</text>
</comment>
<comment type="pathway">
    <text evidence="1">Isoprenoid biosynthesis; dimethylallyl diphosphate biosynthesis; dimethylallyl diphosphate from (2E)-4-hydroxy-3-methylbutenyl diphosphate: step 1/1.</text>
</comment>
<comment type="pathway">
    <text evidence="1">Isoprenoid biosynthesis; isopentenyl diphosphate biosynthesis via DXP pathway; isopentenyl diphosphate from 1-deoxy-D-xylulose 5-phosphate: step 6/6.</text>
</comment>
<comment type="similarity">
    <text evidence="1">Belongs to the IspH family.</text>
</comment>
<name>ISPH_CLOPE</name>